<organism>
    <name type="scientific">Salmonella choleraesuis (strain SC-B67)</name>
    <dbReference type="NCBI Taxonomy" id="321314"/>
    <lineage>
        <taxon>Bacteria</taxon>
        <taxon>Pseudomonadati</taxon>
        <taxon>Pseudomonadota</taxon>
        <taxon>Gammaproteobacteria</taxon>
        <taxon>Enterobacterales</taxon>
        <taxon>Enterobacteriaceae</taxon>
        <taxon>Salmonella</taxon>
    </lineage>
</organism>
<protein>
    <recommendedName>
        <fullName evidence="1">Phospho-N-acetylmuramoyl-pentapeptide-transferase</fullName>
        <ecNumber evidence="1">2.7.8.13</ecNumber>
    </recommendedName>
    <alternativeName>
        <fullName evidence="1">UDP-MurNAc-pentapeptide phosphotransferase</fullName>
    </alternativeName>
</protein>
<evidence type="ECO:0000255" key="1">
    <source>
        <dbReference type="HAMAP-Rule" id="MF_00038"/>
    </source>
</evidence>
<comment type="function">
    <text evidence="1">Catalyzes the initial step of the lipid cycle reactions in the biosynthesis of the cell wall peptidoglycan: transfers peptidoglycan precursor phospho-MurNAc-pentapeptide from UDP-MurNAc-pentapeptide onto the lipid carrier undecaprenyl phosphate, yielding undecaprenyl-pyrophosphoryl-MurNAc-pentapeptide, known as lipid I.</text>
</comment>
<comment type="catalytic activity">
    <reaction evidence="1">
        <text>UDP-N-acetyl-alpha-D-muramoyl-L-alanyl-gamma-D-glutamyl-meso-2,6-diaminopimeloyl-D-alanyl-D-alanine + di-trans,octa-cis-undecaprenyl phosphate = di-trans,octa-cis-undecaprenyl diphospho-N-acetyl-alpha-D-muramoyl-L-alanyl-D-glutamyl-meso-2,6-diaminopimeloyl-D-alanyl-D-alanine + UMP</text>
        <dbReference type="Rhea" id="RHEA:28386"/>
        <dbReference type="ChEBI" id="CHEBI:57865"/>
        <dbReference type="ChEBI" id="CHEBI:60392"/>
        <dbReference type="ChEBI" id="CHEBI:61386"/>
        <dbReference type="ChEBI" id="CHEBI:61387"/>
        <dbReference type="EC" id="2.7.8.13"/>
    </reaction>
</comment>
<comment type="cofactor">
    <cofactor evidence="1">
        <name>Mg(2+)</name>
        <dbReference type="ChEBI" id="CHEBI:18420"/>
    </cofactor>
</comment>
<comment type="pathway">
    <text evidence="1">Cell wall biogenesis; peptidoglycan biosynthesis.</text>
</comment>
<comment type="subcellular location">
    <subcellularLocation>
        <location evidence="1">Cell inner membrane</location>
        <topology evidence="1">Multi-pass membrane protein</topology>
    </subcellularLocation>
</comment>
<comment type="similarity">
    <text evidence="1">Belongs to the glycosyltransferase 4 family. MraY subfamily.</text>
</comment>
<feature type="chain" id="PRO_0000235479" description="Phospho-N-acetylmuramoyl-pentapeptide-transferase">
    <location>
        <begin position="1"/>
        <end position="360"/>
    </location>
</feature>
<feature type="topological domain" description="Periplasmic" evidence="1">
    <location>
        <begin position="1"/>
        <end position="25"/>
    </location>
</feature>
<feature type="transmembrane region" description="Helical" evidence="1">
    <location>
        <begin position="26"/>
        <end position="46"/>
    </location>
</feature>
<feature type="topological domain" description="Cytoplasmic" evidence="1">
    <location>
        <begin position="47"/>
        <end position="71"/>
    </location>
</feature>
<feature type="transmembrane region" description="Helical" evidence="1">
    <location>
        <begin position="72"/>
        <end position="92"/>
    </location>
</feature>
<feature type="topological domain" description="Periplasmic" evidence="1">
    <location>
        <position position="93"/>
    </location>
</feature>
<feature type="transmembrane region" description="Helical" evidence="1">
    <location>
        <begin position="94"/>
        <end position="114"/>
    </location>
</feature>
<feature type="topological domain" description="Cytoplasmic" evidence="1">
    <location>
        <begin position="115"/>
        <end position="131"/>
    </location>
</feature>
<feature type="transmembrane region" description="Helical" evidence="1">
    <location>
        <begin position="132"/>
        <end position="152"/>
    </location>
</feature>
<feature type="topological domain" description="Periplasmic" evidence="1">
    <location>
        <begin position="153"/>
        <end position="167"/>
    </location>
</feature>
<feature type="transmembrane region" description="Helical" evidence="1">
    <location>
        <begin position="168"/>
        <end position="188"/>
    </location>
</feature>
<feature type="topological domain" description="Cytoplasmic" evidence="1">
    <location>
        <begin position="189"/>
        <end position="198"/>
    </location>
</feature>
<feature type="transmembrane region" description="Helical" evidence="1">
    <location>
        <begin position="199"/>
        <end position="219"/>
    </location>
</feature>
<feature type="topological domain" description="Periplasmic" evidence="1">
    <location>
        <begin position="220"/>
        <end position="235"/>
    </location>
</feature>
<feature type="transmembrane region" description="Helical" evidence="1">
    <location>
        <begin position="236"/>
        <end position="256"/>
    </location>
</feature>
<feature type="topological domain" description="Cytoplasmic" evidence="1">
    <location>
        <begin position="257"/>
        <end position="262"/>
    </location>
</feature>
<feature type="transmembrane region" description="Helical" evidence="1">
    <location>
        <begin position="263"/>
        <end position="283"/>
    </location>
</feature>
<feature type="topological domain" description="Periplasmic" evidence="1">
    <location>
        <begin position="284"/>
        <end position="287"/>
    </location>
</feature>
<feature type="transmembrane region" description="Helical" evidence="1">
    <location>
        <begin position="288"/>
        <end position="308"/>
    </location>
</feature>
<feature type="topological domain" description="Cytoplasmic" evidence="1">
    <location>
        <begin position="309"/>
        <end position="337"/>
    </location>
</feature>
<feature type="transmembrane region" description="Helical" evidence="1">
    <location>
        <begin position="338"/>
        <end position="358"/>
    </location>
</feature>
<feature type="topological domain" description="Periplasmic" evidence="1">
    <location>
        <begin position="359"/>
        <end position="360"/>
    </location>
</feature>
<reference key="1">
    <citation type="journal article" date="2005" name="Nucleic Acids Res.">
        <title>The genome sequence of Salmonella enterica serovar Choleraesuis, a highly invasive and resistant zoonotic pathogen.</title>
        <authorList>
            <person name="Chiu C.-H."/>
            <person name="Tang P."/>
            <person name="Chu C."/>
            <person name="Hu S."/>
            <person name="Bao Q."/>
            <person name="Yu J."/>
            <person name="Chou Y.-Y."/>
            <person name="Wang H.-S."/>
            <person name="Lee Y.-S."/>
        </authorList>
    </citation>
    <scope>NUCLEOTIDE SEQUENCE [LARGE SCALE GENOMIC DNA]</scope>
    <source>
        <strain>SC-B67</strain>
    </source>
</reference>
<proteinExistence type="inferred from homology"/>
<gene>
    <name evidence="1" type="primary">mraY</name>
    <name type="ordered locus">SCH_0122</name>
</gene>
<keyword id="KW-0131">Cell cycle</keyword>
<keyword id="KW-0132">Cell division</keyword>
<keyword id="KW-0997">Cell inner membrane</keyword>
<keyword id="KW-1003">Cell membrane</keyword>
<keyword id="KW-0133">Cell shape</keyword>
<keyword id="KW-0961">Cell wall biogenesis/degradation</keyword>
<keyword id="KW-0460">Magnesium</keyword>
<keyword id="KW-0472">Membrane</keyword>
<keyword id="KW-0479">Metal-binding</keyword>
<keyword id="KW-0573">Peptidoglycan synthesis</keyword>
<keyword id="KW-0808">Transferase</keyword>
<keyword id="KW-0812">Transmembrane</keyword>
<keyword id="KW-1133">Transmembrane helix</keyword>
<dbReference type="EC" id="2.7.8.13" evidence="1"/>
<dbReference type="EMBL" id="AE017220">
    <property type="protein sequence ID" value="AAX64028.1"/>
    <property type="molecule type" value="Genomic_DNA"/>
</dbReference>
<dbReference type="RefSeq" id="WP_000964138.1">
    <property type="nucleotide sequence ID" value="NC_006905.1"/>
</dbReference>
<dbReference type="SMR" id="Q57TD3"/>
<dbReference type="KEGG" id="sec:SCH_0122"/>
<dbReference type="HOGENOM" id="CLU_023982_0_0_6"/>
<dbReference type="UniPathway" id="UPA00219"/>
<dbReference type="Proteomes" id="UP000000538">
    <property type="component" value="Chromosome"/>
</dbReference>
<dbReference type="GO" id="GO:0005886">
    <property type="term" value="C:plasma membrane"/>
    <property type="evidence" value="ECO:0007669"/>
    <property type="project" value="UniProtKB-SubCell"/>
</dbReference>
<dbReference type="GO" id="GO:0046872">
    <property type="term" value="F:metal ion binding"/>
    <property type="evidence" value="ECO:0007669"/>
    <property type="project" value="UniProtKB-KW"/>
</dbReference>
<dbReference type="GO" id="GO:0008963">
    <property type="term" value="F:phospho-N-acetylmuramoyl-pentapeptide-transferase activity"/>
    <property type="evidence" value="ECO:0007669"/>
    <property type="project" value="UniProtKB-UniRule"/>
</dbReference>
<dbReference type="GO" id="GO:0051992">
    <property type="term" value="F:UDP-N-acetylmuramoyl-L-alanyl-D-glutamyl-meso-2,6-diaminopimelyl-D-alanyl-D-alanine:undecaprenyl-phosphate transferase activity"/>
    <property type="evidence" value="ECO:0007669"/>
    <property type="project" value="RHEA"/>
</dbReference>
<dbReference type="GO" id="GO:0051301">
    <property type="term" value="P:cell division"/>
    <property type="evidence" value="ECO:0007669"/>
    <property type="project" value="UniProtKB-KW"/>
</dbReference>
<dbReference type="GO" id="GO:0071555">
    <property type="term" value="P:cell wall organization"/>
    <property type="evidence" value="ECO:0007669"/>
    <property type="project" value="UniProtKB-KW"/>
</dbReference>
<dbReference type="GO" id="GO:0009252">
    <property type="term" value="P:peptidoglycan biosynthetic process"/>
    <property type="evidence" value="ECO:0007669"/>
    <property type="project" value="UniProtKB-UniRule"/>
</dbReference>
<dbReference type="GO" id="GO:0008360">
    <property type="term" value="P:regulation of cell shape"/>
    <property type="evidence" value="ECO:0007669"/>
    <property type="project" value="UniProtKB-KW"/>
</dbReference>
<dbReference type="CDD" id="cd06852">
    <property type="entry name" value="GT_MraY"/>
    <property type="match status" value="1"/>
</dbReference>
<dbReference type="HAMAP" id="MF_00038">
    <property type="entry name" value="MraY"/>
    <property type="match status" value="1"/>
</dbReference>
<dbReference type="InterPro" id="IPR000715">
    <property type="entry name" value="Glycosyl_transferase_4"/>
</dbReference>
<dbReference type="InterPro" id="IPR003524">
    <property type="entry name" value="PNAcMuramoyl-5peptid_Trfase"/>
</dbReference>
<dbReference type="InterPro" id="IPR018480">
    <property type="entry name" value="PNAcMuramoyl-5peptid_Trfase_CS"/>
</dbReference>
<dbReference type="NCBIfam" id="TIGR00445">
    <property type="entry name" value="mraY"/>
    <property type="match status" value="1"/>
</dbReference>
<dbReference type="PANTHER" id="PTHR22926">
    <property type="entry name" value="PHOSPHO-N-ACETYLMURAMOYL-PENTAPEPTIDE-TRANSFERASE"/>
    <property type="match status" value="1"/>
</dbReference>
<dbReference type="PANTHER" id="PTHR22926:SF5">
    <property type="entry name" value="PHOSPHO-N-ACETYLMURAMOYL-PENTAPEPTIDE-TRANSFERASE HOMOLOG"/>
    <property type="match status" value="1"/>
</dbReference>
<dbReference type="Pfam" id="PF00953">
    <property type="entry name" value="Glycos_transf_4"/>
    <property type="match status" value="1"/>
</dbReference>
<dbReference type="Pfam" id="PF10555">
    <property type="entry name" value="MraY_sig1"/>
    <property type="match status" value="1"/>
</dbReference>
<dbReference type="PROSITE" id="PS01347">
    <property type="entry name" value="MRAY_1"/>
    <property type="match status" value="1"/>
</dbReference>
<dbReference type="PROSITE" id="PS01348">
    <property type="entry name" value="MRAY_2"/>
    <property type="match status" value="1"/>
</dbReference>
<name>MRAY_SALCH</name>
<sequence length="360" mass="40007">MLVWLAEHLVKYYSGFNVFSYLTFRAIVSLLTALFISLWMGPRMIARLQKLSFGQVVRNDGPESHFSKRGTPTMGGIMILTAIVISVLLWAYPSNPYVWCVLVVLIGYGIIGFVDDYRKVVRKDTKGLIARWKYFWMSVIALGVAFALYLVGKDTPATQLVVPFFKDVMPQLGLFYILLSYFVIVGTGNAVNLTDGLDGLAIMPTVFVAAGFALVAWATGNMNFANYLHIPYLRHAGELVIVCTAIVGAGLGFLWFNTYPAQVFMGDVGSLALGGALGIIAVLLRQEFLLVIMGGVFVVETLSVILQVGSFKLRGQRIFRMAPIHHHYELKGWPEPRVIVRFWIISLMLVLIGLATLKVR</sequence>
<accession>Q57TD3</accession>